<sequence>MSLFSTSLWTTTVMSIIVGLYMLFHNSGESFDFGSFLLDTSPYTWGLLGIASCVAFGIIGAAWGIFICGTSILGGAVKAPRIKTKNLISIIFCEVVAIYSLIIAIVFSAKINDINPAGFYTKSHYYTGFALFWGGITVGLCNLICGVCVGITGSSAALADAQDASLFVKVLVVEIFGSVLGLFGLIVGLLIGGKASDFS</sequence>
<protein>
    <recommendedName>
        <fullName>Probable V-type proton ATPase 20 kDa proteolipid subunit</fullName>
        <shortName>V-ATPase 20 kDa proteolipid subunit</shortName>
    </recommendedName>
    <alternativeName>
        <fullName>Vacuolar proton pump 20 kDa proteolipid subunit</fullName>
    </alternativeName>
</protein>
<reference key="1">
    <citation type="journal article" date="2002" name="Nature">
        <title>The genome sequence of Schizosaccharomyces pombe.</title>
        <authorList>
            <person name="Wood V."/>
            <person name="Gwilliam R."/>
            <person name="Rajandream M.A."/>
            <person name="Lyne M.H."/>
            <person name="Lyne R."/>
            <person name="Stewart A."/>
            <person name="Sgouros J.G."/>
            <person name="Peat N."/>
            <person name="Hayles J."/>
            <person name="Baker S.G."/>
            <person name="Basham D."/>
            <person name="Bowman S."/>
            <person name="Brooks K."/>
            <person name="Brown D."/>
            <person name="Brown S."/>
            <person name="Chillingworth T."/>
            <person name="Churcher C.M."/>
            <person name="Collins M."/>
            <person name="Connor R."/>
            <person name="Cronin A."/>
            <person name="Davis P."/>
            <person name="Feltwell T."/>
            <person name="Fraser A."/>
            <person name="Gentles S."/>
            <person name="Goble A."/>
            <person name="Hamlin N."/>
            <person name="Harris D.E."/>
            <person name="Hidalgo J."/>
            <person name="Hodgson G."/>
            <person name="Holroyd S."/>
            <person name="Hornsby T."/>
            <person name="Howarth S."/>
            <person name="Huckle E.J."/>
            <person name="Hunt S."/>
            <person name="Jagels K."/>
            <person name="James K.D."/>
            <person name="Jones L."/>
            <person name="Jones M."/>
            <person name="Leather S."/>
            <person name="McDonald S."/>
            <person name="McLean J."/>
            <person name="Mooney P."/>
            <person name="Moule S."/>
            <person name="Mungall K.L."/>
            <person name="Murphy L.D."/>
            <person name="Niblett D."/>
            <person name="Odell C."/>
            <person name="Oliver K."/>
            <person name="O'Neil S."/>
            <person name="Pearson D."/>
            <person name="Quail M.A."/>
            <person name="Rabbinowitsch E."/>
            <person name="Rutherford K.M."/>
            <person name="Rutter S."/>
            <person name="Saunders D."/>
            <person name="Seeger K."/>
            <person name="Sharp S."/>
            <person name="Skelton J."/>
            <person name="Simmonds M.N."/>
            <person name="Squares R."/>
            <person name="Squares S."/>
            <person name="Stevens K."/>
            <person name="Taylor K."/>
            <person name="Taylor R.G."/>
            <person name="Tivey A."/>
            <person name="Walsh S.V."/>
            <person name="Warren T."/>
            <person name="Whitehead S."/>
            <person name="Woodward J.R."/>
            <person name="Volckaert G."/>
            <person name="Aert R."/>
            <person name="Robben J."/>
            <person name="Grymonprez B."/>
            <person name="Weltjens I."/>
            <person name="Vanstreels E."/>
            <person name="Rieger M."/>
            <person name="Schaefer M."/>
            <person name="Mueller-Auer S."/>
            <person name="Gabel C."/>
            <person name="Fuchs M."/>
            <person name="Duesterhoeft A."/>
            <person name="Fritzc C."/>
            <person name="Holzer E."/>
            <person name="Moestl D."/>
            <person name="Hilbert H."/>
            <person name="Borzym K."/>
            <person name="Langer I."/>
            <person name="Beck A."/>
            <person name="Lehrach H."/>
            <person name="Reinhardt R."/>
            <person name="Pohl T.M."/>
            <person name="Eger P."/>
            <person name="Zimmermann W."/>
            <person name="Wedler H."/>
            <person name="Wambutt R."/>
            <person name="Purnelle B."/>
            <person name="Goffeau A."/>
            <person name="Cadieu E."/>
            <person name="Dreano S."/>
            <person name="Gloux S."/>
            <person name="Lelaure V."/>
            <person name="Mottier S."/>
            <person name="Galibert F."/>
            <person name="Aves S.J."/>
            <person name="Xiang Z."/>
            <person name="Hunt C."/>
            <person name="Moore K."/>
            <person name="Hurst S.M."/>
            <person name="Lucas M."/>
            <person name="Rochet M."/>
            <person name="Gaillardin C."/>
            <person name="Tallada V.A."/>
            <person name="Garzon A."/>
            <person name="Thode G."/>
            <person name="Daga R.R."/>
            <person name="Cruzado L."/>
            <person name="Jimenez J."/>
            <person name="Sanchez M."/>
            <person name="del Rey F."/>
            <person name="Benito J."/>
            <person name="Dominguez A."/>
            <person name="Revuelta J.L."/>
            <person name="Moreno S."/>
            <person name="Armstrong J."/>
            <person name="Forsburg S.L."/>
            <person name="Cerutti L."/>
            <person name="Lowe T."/>
            <person name="McCombie W.R."/>
            <person name="Paulsen I."/>
            <person name="Potashkin J."/>
            <person name="Shpakovski G.V."/>
            <person name="Ussery D."/>
            <person name="Barrell B.G."/>
            <person name="Nurse P."/>
        </authorList>
    </citation>
    <scope>NUCLEOTIDE SEQUENCE [LARGE SCALE GENOMIC DNA]</scope>
    <source>
        <strain>972 / ATCC 24843</strain>
    </source>
</reference>
<comment type="function">
    <text evidence="1">Proton-conducting pore forming subunit of the V0 complex of vacuolar(H+)-ATPase (V-ATPase), a multisubunit enzyme composed of a peripheral complex (V1) that hydrolyzes ATP and a membrane integral complex (V0) that translocates protons (By similarity). V-ATPase is responsible for acidifying and maintaining the pH of intracellular compartments (By similarity).</text>
</comment>
<comment type="subunit">
    <text evidence="1">V-ATPase is a heteromultimeric enzyme composed of a peripheral catalytic V1 complex (components A to H) attached to an integral membrane V0 proton pore complex (components: a, c, c', c'', d, e, f and VOA1) (By similarity). The decameric c-ring forms the proton-conducting pore, and is composed of eight proteolipid subunits c, one subunit c' and one subunit c'' (By similarity).</text>
</comment>
<comment type="subcellular location">
    <subcellularLocation>
        <location evidence="1">Vacuole membrane</location>
        <topology evidence="2">Multi-pass membrane protein</topology>
    </subcellularLocation>
</comment>
<comment type="similarity">
    <text evidence="3">Belongs to the V-ATPase proteolipid subunit family.</text>
</comment>
<keyword id="KW-0375">Hydrogen ion transport</keyword>
<keyword id="KW-0406">Ion transport</keyword>
<keyword id="KW-0472">Membrane</keyword>
<keyword id="KW-1185">Reference proteome</keyword>
<keyword id="KW-0812">Transmembrane</keyword>
<keyword id="KW-1133">Transmembrane helix</keyword>
<keyword id="KW-0813">Transport</keyword>
<keyword id="KW-0926">Vacuole</keyword>
<name>VATO_SCHPO</name>
<evidence type="ECO:0000250" key="1">
    <source>
        <dbReference type="UniProtKB" id="P23968"/>
    </source>
</evidence>
<evidence type="ECO:0000255" key="2"/>
<evidence type="ECO:0000305" key="3"/>
<gene>
    <name type="primary">vma16</name>
    <name type="ORF">SPAC2C4.13</name>
</gene>
<accession>O14046</accession>
<organism>
    <name type="scientific">Schizosaccharomyces pombe (strain 972 / ATCC 24843)</name>
    <name type="common">Fission yeast</name>
    <dbReference type="NCBI Taxonomy" id="284812"/>
    <lineage>
        <taxon>Eukaryota</taxon>
        <taxon>Fungi</taxon>
        <taxon>Dikarya</taxon>
        <taxon>Ascomycota</taxon>
        <taxon>Taphrinomycotina</taxon>
        <taxon>Schizosaccharomycetes</taxon>
        <taxon>Schizosaccharomycetales</taxon>
        <taxon>Schizosaccharomycetaceae</taxon>
        <taxon>Schizosaccharomyces</taxon>
    </lineage>
</organism>
<proteinExistence type="inferred from homology"/>
<dbReference type="EMBL" id="CU329670">
    <property type="protein sequence ID" value="CAB16373.1"/>
    <property type="molecule type" value="Genomic_DNA"/>
</dbReference>
<dbReference type="PIR" id="T38524">
    <property type="entry name" value="T38524"/>
</dbReference>
<dbReference type="RefSeq" id="NP_594516.1">
    <property type="nucleotide sequence ID" value="NM_001019945.2"/>
</dbReference>
<dbReference type="SMR" id="O14046"/>
<dbReference type="FunCoup" id="O14046">
    <property type="interactions" value="145"/>
</dbReference>
<dbReference type="STRING" id="284812.O14046"/>
<dbReference type="PaxDb" id="4896-SPAC2C4.13.1"/>
<dbReference type="EnsemblFungi" id="SPAC2C4.13.1">
    <property type="protein sequence ID" value="SPAC2C4.13.1:pep"/>
    <property type="gene ID" value="SPAC2C4.13"/>
</dbReference>
<dbReference type="GeneID" id="2541999"/>
<dbReference type="KEGG" id="spo:2541999"/>
<dbReference type="PomBase" id="SPAC2C4.13">
    <property type="gene designation" value="vma16"/>
</dbReference>
<dbReference type="VEuPathDB" id="FungiDB:SPAC2C4.13"/>
<dbReference type="eggNOG" id="KOG0233">
    <property type="taxonomic scope" value="Eukaryota"/>
</dbReference>
<dbReference type="HOGENOM" id="CLU_085752_0_1_1"/>
<dbReference type="InParanoid" id="O14046"/>
<dbReference type="OMA" id="TSPYMWG"/>
<dbReference type="PhylomeDB" id="O14046"/>
<dbReference type="Reactome" id="R-SPO-1222556">
    <property type="pathway name" value="ROS and RNS production in phagocytes"/>
</dbReference>
<dbReference type="Reactome" id="R-SPO-77387">
    <property type="pathway name" value="Insulin receptor recycling"/>
</dbReference>
<dbReference type="Reactome" id="R-SPO-917977">
    <property type="pathway name" value="Transferrin endocytosis and recycling"/>
</dbReference>
<dbReference type="Reactome" id="R-SPO-9639288">
    <property type="pathway name" value="Amino acids regulate mTORC1"/>
</dbReference>
<dbReference type="PRO" id="PR:O14046"/>
<dbReference type="Proteomes" id="UP000002485">
    <property type="component" value="Chromosome I"/>
</dbReference>
<dbReference type="GO" id="GO:0005783">
    <property type="term" value="C:endoplasmic reticulum"/>
    <property type="evidence" value="ECO:0007005"/>
    <property type="project" value="PomBase"/>
</dbReference>
<dbReference type="GO" id="GO:0000329">
    <property type="term" value="C:fungal-type vacuole membrane"/>
    <property type="evidence" value="ECO:0000305"/>
    <property type="project" value="PomBase"/>
</dbReference>
<dbReference type="GO" id="GO:0016020">
    <property type="term" value="C:membrane"/>
    <property type="evidence" value="ECO:0000318"/>
    <property type="project" value="GO_Central"/>
</dbReference>
<dbReference type="GO" id="GO:0000220">
    <property type="term" value="C:vacuolar proton-transporting V-type ATPase, V0 domain"/>
    <property type="evidence" value="ECO:0000266"/>
    <property type="project" value="PomBase"/>
</dbReference>
<dbReference type="GO" id="GO:0016887">
    <property type="term" value="F:ATP hydrolysis activity"/>
    <property type="evidence" value="ECO:0000305"/>
    <property type="project" value="PomBase"/>
</dbReference>
<dbReference type="GO" id="GO:0046961">
    <property type="term" value="F:proton-transporting ATPase activity, rotational mechanism"/>
    <property type="evidence" value="ECO:0007669"/>
    <property type="project" value="InterPro"/>
</dbReference>
<dbReference type="GO" id="GO:1902600">
    <property type="term" value="P:proton transmembrane transport"/>
    <property type="evidence" value="ECO:0000305"/>
    <property type="project" value="PomBase"/>
</dbReference>
<dbReference type="GO" id="GO:0007035">
    <property type="term" value="P:vacuolar acidification"/>
    <property type="evidence" value="ECO:0000266"/>
    <property type="project" value="PomBase"/>
</dbReference>
<dbReference type="CDD" id="cd18177">
    <property type="entry name" value="ATP-synt_Vo_c_ATP6F_rpt1"/>
    <property type="match status" value="1"/>
</dbReference>
<dbReference type="CDD" id="cd18178">
    <property type="entry name" value="ATP-synt_Vo_c_ATP6F_rpt2"/>
    <property type="match status" value="1"/>
</dbReference>
<dbReference type="FunFam" id="1.20.120.610:FF:000002">
    <property type="entry name" value="V-type proton ATPase proteolipid subunit"/>
    <property type="match status" value="1"/>
</dbReference>
<dbReference type="Gene3D" id="1.20.120.610">
    <property type="entry name" value="lithium bound rotor ring of v- atpase"/>
    <property type="match status" value="1"/>
</dbReference>
<dbReference type="InterPro" id="IPR002379">
    <property type="entry name" value="ATPase_proteolipid_c-like_dom"/>
</dbReference>
<dbReference type="InterPro" id="IPR000245">
    <property type="entry name" value="ATPase_proteolipid_csu"/>
</dbReference>
<dbReference type="InterPro" id="IPR035921">
    <property type="entry name" value="F/V-ATP_Csub_sf"/>
</dbReference>
<dbReference type="PANTHER" id="PTHR10263">
    <property type="entry name" value="V-TYPE PROTON ATPASE PROTEOLIPID SUBUNIT"/>
    <property type="match status" value="1"/>
</dbReference>
<dbReference type="Pfam" id="PF00137">
    <property type="entry name" value="ATP-synt_C"/>
    <property type="match status" value="2"/>
</dbReference>
<dbReference type="PRINTS" id="PR00122">
    <property type="entry name" value="VACATPASE"/>
</dbReference>
<dbReference type="SUPFAM" id="SSF81333">
    <property type="entry name" value="F1F0 ATP synthase subunit C"/>
    <property type="match status" value="2"/>
</dbReference>
<feature type="chain" id="PRO_0000071779" description="Probable V-type proton ATPase 20 kDa proteolipid subunit">
    <location>
        <begin position="1"/>
        <end position="199"/>
    </location>
</feature>
<feature type="topological domain" description="Vacuolar" evidence="3">
    <location>
        <begin position="1"/>
        <end position="3"/>
    </location>
</feature>
<feature type="transmembrane region" description="Helical" evidence="2">
    <location>
        <begin position="4"/>
        <end position="24"/>
    </location>
</feature>
<feature type="topological domain" description="Cytoplasmic" evidence="3">
    <location>
        <begin position="25"/>
        <end position="46"/>
    </location>
</feature>
<feature type="transmembrane region" description="Helical" evidence="2">
    <location>
        <begin position="47"/>
        <end position="67"/>
    </location>
</feature>
<feature type="topological domain" description="Vacuolar" evidence="3">
    <location>
        <begin position="68"/>
        <end position="86"/>
    </location>
</feature>
<feature type="transmembrane region" description="Helical" evidence="2">
    <location>
        <begin position="87"/>
        <end position="107"/>
    </location>
</feature>
<feature type="topological domain" description="Cytoplasmic" evidence="3">
    <location>
        <begin position="108"/>
        <end position="130"/>
    </location>
</feature>
<feature type="transmembrane region" description="Helical" evidence="2">
    <location>
        <begin position="131"/>
        <end position="151"/>
    </location>
</feature>
<feature type="topological domain" description="Vacuolar" evidence="3">
    <location>
        <begin position="152"/>
        <end position="170"/>
    </location>
</feature>
<feature type="transmembrane region" description="Helical" evidence="2">
    <location>
        <begin position="171"/>
        <end position="191"/>
    </location>
</feature>
<feature type="topological domain" description="Cytoplasmic" evidence="3">
    <location>
        <begin position="192"/>
        <end position="199"/>
    </location>
</feature>
<feature type="site" description="Essential for proton translocation" evidence="1">
    <location>
        <position position="94"/>
    </location>
</feature>